<reference key="1">
    <citation type="journal article" date="2007" name="J. Bacteriol.">
        <title>The complete genome sequence of Campylobacter jejuni strain 81116 (NCTC11828).</title>
        <authorList>
            <person name="Pearson B.M."/>
            <person name="Gaskin D.J.H."/>
            <person name="Segers R.P.A.M."/>
            <person name="Wells J.M."/>
            <person name="Nuijten P.J.M."/>
            <person name="van Vliet A.H.M."/>
        </authorList>
    </citation>
    <scope>NUCLEOTIDE SEQUENCE [LARGE SCALE GENOMIC DNA]</scope>
    <source>
        <strain>81116 / NCTC 11828</strain>
    </source>
</reference>
<organism>
    <name type="scientific">Campylobacter jejuni subsp. jejuni serotype O:6 (strain 81116 / NCTC 11828)</name>
    <dbReference type="NCBI Taxonomy" id="407148"/>
    <lineage>
        <taxon>Bacteria</taxon>
        <taxon>Pseudomonadati</taxon>
        <taxon>Campylobacterota</taxon>
        <taxon>Epsilonproteobacteria</taxon>
        <taxon>Campylobacterales</taxon>
        <taxon>Campylobacteraceae</taxon>
        <taxon>Campylobacter</taxon>
    </lineage>
</organism>
<comment type="function">
    <text evidence="1">Responsible for synthesis of pseudouridine from uracil-55 in the psi GC loop of transfer RNAs.</text>
</comment>
<comment type="catalytic activity">
    <reaction evidence="1">
        <text>uridine(55) in tRNA = pseudouridine(55) in tRNA</text>
        <dbReference type="Rhea" id="RHEA:42532"/>
        <dbReference type="Rhea" id="RHEA-COMP:10101"/>
        <dbReference type="Rhea" id="RHEA-COMP:10102"/>
        <dbReference type="ChEBI" id="CHEBI:65314"/>
        <dbReference type="ChEBI" id="CHEBI:65315"/>
        <dbReference type="EC" id="5.4.99.25"/>
    </reaction>
</comment>
<comment type="similarity">
    <text evidence="1">Belongs to the pseudouridine synthase TruB family. Type 1 subfamily.</text>
</comment>
<keyword id="KW-0413">Isomerase</keyword>
<keyword id="KW-0819">tRNA processing</keyword>
<protein>
    <recommendedName>
        <fullName evidence="1">tRNA pseudouridine synthase B</fullName>
        <ecNumber evidence="1">5.4.99.25</ecNumber>
    </recommendedName>
    <alternativeName>
        <fullName evidence="1">tRNA pseudouridine(55) synthase</fullName>
        <shortName evidence="1">Psi55 synthase</shortName>
    </alternativeName>
    <alternativeName>
        <fullName evidence="1">tRNA pseudouridylate synthase</fullName>
    </alternativeName>
    <alternativeName>
        <fullName evidence="1">tRNA-uridine isomerase</fullName>
    </alternativeName>
</protein>
<accession>A8FMF5</accession>
<evidence type="ECO:0000255" key="1">
    <source>
        <dbReference type="HAMAP-Rule" id="MF_01080"/>
    </source>
</evidence>
<feature type="chain" id="PRO_1000084564" description="tRNA pseudouridine synthase B">
    <location>
        <begin position="1"/>
        <end position="272"/>
    </location>
</feature>
<feature type="active site" description="Nucleophile" evidence="1">
    <location>
        <position position="38"/>
    </location>
</feature>
<proteinExistence type="inferred from homology"/>
<name>TRUB_CAMJ8</name>
<dbReference type="EC" id="5.4.99.25" evidence="1"/>
<dbReference type="EMBL" id="CP000814">
    <property type="protein sequence ID" value="ABV52642.1"/>
    <property type="molecule type" value="Genomic_DNA"/>
</dbReference>
<dbReference type="RefSeq" id="WP_002866123.1">
    <property type="nucleotide sequence ID" value="NC_009839.1"/>
</dbReference>
<dbReference type="SMR" id="A8FMF5"/>
<dbReference type="KEGG" id="cju:C8J_1043"/>
<dbReference type="HOGENOM" id="CLU_032087_2_0_7"/>
<dbReference type="GO" id="GO:0003723">
    <property type="term" value="F:RNA binding"/>
    <property type="evidence" value="ECO:0007669"/>
    <property type="project" value="InterPro"/>
</dbReference>
<dbReference type="GO" id="GO:0160148">
    <property type="term" value="F:tRNA pseudouridine(55) synthase activity"/>
    <property type="evidence" value="ECO:0007669"/>
    <property type="project" value="UniProtKB-EC"/>
</dbReference>
<dbReference type="GO" id="GO:1990481">
    <property type="term" value="P:mRNA pseudouridine synthesis"/>
    <property type="evidence" value="ECO:0007669"/>
    <property type="project" value="TreeGrafter"/>
</dbReference>
<dbReference type="GO" id="GO:0031119">
    <property type="term" value="P:tRNA pseudouridine synthesis"/>
    <property type="evidence" value="ECO:0007669"/>
    <property type="project" value="UniProtKB-UniRule"/>
</dbReference>
<dbReference type="Gene3D" id="3.30.2350.10">
    <property type="entry name" value="Pseudouridine synthase"/>
    <property type="match status" value="1"/>
</dbReference>
<dbReference type="HAMAP" id="MF_01080">
    <property type="entry name" value="TruB_bact"/>
    <property type="match status" value="1"/>
</dbReference>
<dbReference type="InterPro" id="IPR020103">
    <property type="entry name" value="PsdUridine_synth_cat_dom_sf"/>
</dbReference>
<dbReference type="InterPro" id="IPR002501">
    <property type="entry name" value="PsdUridine_synth_N"/>
</dbReference>
<dbReference type="InterPro" id="IPR014780">
    <property type="entry name" value="tRNA_psdUridine_synth_TruB"/>
</dbReference>
<dbReference type="NCBIfam" id="TIGR00431">
    <property type="entry name" value="TruB"/>
    <property type="match status" value="1"/>
</dbReference>
<dbReference type="PANTHER" id="PTHR13767:SF2">
    <property type="entry name" value="PSEUDOURIDYLATE SYNTHASE TRUB1"/>
    <property type="match status" value="1"/>
</dbReference>
<dbReference type="PANTHER" id="PTHR13767">
    <property type="entry name" value="TRNA-PSEUDOURIDINE SYNTHASE"/>
    <property type="match status" value="1"/>
</dbReference>
<dbReference type="Pfam" id="PF01509">
    <property type="entry name" value="TruB_N"/>
    <property type="match status" value="1"/>
</dbReference>
<dbReference type="SUPFAM" id="SSF55120">
    <property type="entry name" value="Pseudouridine synthase"/>
    <property type="match status" value="1"/>
</dbReference>
<gene>
    <name evidence="1" type="primary">truB</name>
    <name type="ordered locus">C8J_1043</name>
</gene>
<sequence>MNKIFAAFKPRGLSSNAFLSTLKKKYKNKKAGYSGTLDPFAKGVLIVAFGQYTKLFRFLKKTPKTYKATLWLGVYSLSLDDQNIKEIKNIKEFDLANLQQIIDQMQGIISYTPPQFSAKRINGTRAYELAKKGIEANLKPCQMEVFDCKILSYNHPFLNIEITVSEGAYIRSYCELFARKLGINATLSSLERIKEGKFVYNNEKSLNVLKYINLKPNFIKDLNKLENGAKIFVEELKFHDEGDYYIETEKYFSIINIKENTVKYLLNKVEKC</sequence>